<reference key="1">
    <citation type="journal article" date="2002" name="J. Bacteriol.">
        <title>Whole-genome comparison of Mycobacterium tuberculosis clinical and laboratory strains.</title>
        <authorList>
            <person name="Fleischmann R.D."/>
            <person name="Alland D."/>
            <person name="Eisen J.A."/>
            <person name="Carpenter L."/>
            <person name="White O."/>
            <person name="Peterson J.D."/>
            <person name="DeBoy R.T."/>
            <person name="Dodson R.J."/>
            <person name="Gwinn M.L."/>
            <person name="Haft D.H."/>
            <person name="Hickey E.K."/>
            <person name="Kolonay J.F."/>
            <person name="Nelson W.C."/>
            <person name="Umayam L.A."/>
            <person name="Ermolaeva M.D."/>
            <person name="Salzberg S.L."/>
            <person name="Delcher A."/>
            <person name="Utterback T.R."/>
            <person name="Weidman J.F."/>
            <person name="Khouri H.M."/>
            <person name="Gill J."/>
            <person name="Mikula A."/>
            <person name="Bishai W."/>
            <person name="Jacobs W.R. Jr."/>
            <person name="Venter J.C."/>
            <person name="Fraser C.M."/>
        </authorList>
    </citation>
    <scope>NUCLEOTIDE SEQUENCE [LARGE SCALE GENOMIC DNA]</scope>
    <source>
        <strain>CDC 1551 / Oshkosh</strain>
    </source>
</reference>
<gene>
    <name type="ordered locus">MT3532.2</name>
</gene>
<protein>
    <recommendedName>
        <fullName>Uncharacterized protein MT3532.2</fullName>
    </recommendedName>
</protein>
<keyword id="KW-1185">Reference proteome</keyword>
<organism>
    <name type="scientific">Mycobacterium tuberculosis (strain CDC 1551 / Oshkosh)</name>
    <dbReference type="NCBI Taxonomy" id="83331"/>
    <lineage>
        <taxon>Bacteria</taxon>
        <taxon>Bacillati</taxon>
        <taxon>Actinomycetota</taxon>
        <taxon>Actinomycetes</taxon>
        <taxon>Mycobacteriales</taxon>
        <taxon>Mycobacteriaceae</taxon>
        <taxon>Mycobacterium</taxon>
        <taxon>Mycobacterium tuberculosis complex</taxon>
    </lineage>
</organism>
<dbReference type="EMBL" id="AE000516">
    <property type="protein sequence ID" value="AAK47872.1"/>
    <property type="molecule type" value="Genomic_DNA"/>
</dbReference>
<dbReference type="PIR" id="E70738">
    <property type="entry name" value="E70738"/>
</dbReference>
<dbReference type="RefSeq" id="WP_003904310.1">
    <property type="nucleotide sequence ID" value="NZ_KK341227.1"/>
</dbReference>
<dbReference type="KEGG" id="mtc:MT3532.2"/>
<dbReference type="HOGENOM" id="CLU_183384_0_0_11"/>
<dbReference type="Proteomes" id="UP000001020">
    <property type="component" value="Chromosome"/>
</dbReference>
<name>Y3424_MYCTO</name>
<accession>P9WKY2</accession>
<accession>L0TFC3</accession>
<accession>P65085</accession>
<accession>Q50704</accession>
<sequence length="120" mass="13018">MPNPVTMLYGRKADLVILPHVLAEERPHPYSTPGRKRGAQIALTTGIDALASFAPQIVNPRHGLSRVVQCLGGCENKRHAYFRSISKTPHIRARGVPSVCAVRTVGVDGAKRPPKPIPVQ</sequence>
<feature type="chain" id="PRO_0000427574" description="Uncharacterized protein MT3532.2">
    <location>
        <begin position="1"/>
        <end position="120"/>
    </location>
</feature>
<proteinExistence type="predicted"/>